<proteinExistence type="inferred from homology"/>
<keyword id="KW-0024">Alternative initiation</keyword>
<dbReference type="EMBL" id="AF473866">
    <property type="status" value="NOT_ANNOTATED_CDS"/>
    <property type="molecule type" value="Genomic_RNA"/>
</dbReference>
<dbReference type="SMR" id="P0C2X3"/>
<dbReference type="Proteomes" id="UP000007623">
    <property type="component" value="Genome"/>
</dbReference>
<protein>
    <recommendedName>
        <fullName>Protein C'</fullName>
    </recommendedName>
</protein>
<name>C_VSIVC</name>
<reference key="1">
    <citation type="journal article" date="2002" name="J. Gen. Virol.">
        <title>Full-length genome analysis of natural isolates of vesicular stomatitis virus (Indiana 1 serotype) from North, Central and South America.</title>
        <authorList>
            <person name="Rodriguez L.L."/>
            <person name="Pauszek S.J."/>
            <person name="Bunch T.A."/>
            <person name="Schumann K.R."/>
        </authorList>
    </citation>
    <scope>NUCLEOTIDE SEQUENCE [GENOMIC RNA]</scope>
</reference>
<gene>
    <name type="primary">P</name>
</gene>
<feature type="chain" id="PRO_0000288652" description="Protein C'">
    <location>
        <begin position="1"/>
        <end position="67"/>
    </location>
</feature>
<feature type="splice variant" id="VSP_025745" description="In isoform C." evidence="2">
    <location>
        <begin position="1"/>
        <end position="12"/>
    </location>
</feature>
<organism>
    <name type="scientific">Vesicular stomatitis Indiana virus (strain 94GUB Central America)</name>
    <name type="common">VSIV</name>
    <dbReference type="NCBI Taxonomy" id="434489"/>
    <lineage>
        <taxon>Viruses</taxon>
        <taxon>Riboviria</taxon>
        <taxon>Orthornavirae</taxon>
        <taxon>Negarnaviricota</taxon>
        <taxon>Haploviricotina</taxon>
        <taxon>Monjiviricetes</taxon>
        <taxon>Mononegavirales</taxon>
        <taxon>Rhabdoviridae</taxon>
        <taxon>Alpharhabdovirinae</taxon>
        <taxon>Vesiculovirus</taxon>
        <taxon>Vesiculovirus indiana</taxon>
    </lineage>
</organism>
<evidence type="ECO:0000250" key="1">
    <source>
        <dbReference type="UniProtKB" id="P0C2X2"/>
    </source>
</evidence>
<evidence type="ECO:0000305" key="2"/>
<comment type="function">
    <text evidence="1">Seems to stimulates transcription by the viral polymerase. May play a role in viral pathogenesis or transmission by insects vectors.</text>
</comment>
<comment type="alternative products">
    <event type="alternative initiation"/>
    <isoform>
        <id>P0C2X3-1</id>
        <name>C'</name>
        <sequence type="displayed"/>
    </isoform>
    <isoform>
        <id>P0C2X3-2</id>
        <name>C</name>
        <sequence type="described" ref="VSP_025745"/>
    </isoform>
</comment>
<comment type="miscellaneous">
    <text>The P gene has two overlapping open reading frames. One encodes the P protein and the other the C'/C proteins.</text>
</comment>
<comment type="similarity">
    <text evidence="2">Belongs to the rhabdoviruses C protein family.</text>
</comment>
<accession>P0C2X3</accession>
<organismHost>
    <name type="scientific">Aedes</name>
    <dbReference type="NCBI Taxonomy" id="7158"/>
</organismHost>
<organismHost>
    <name type="scientific">Bos taurus</name>
    <name type="common">Bovine</name>
    <dbReference type="NCBI Taxonomy" id="9913"/>
</organismHost>
<organismHost>
    <name type="scientific">Culicoides</name>
    <dbReference type="NCBI Taxonomy" id="58271"/>
</organismHost>
<organismHost>
    <name type="scientific">Equus asinus</name>
    <name type="common">Donkey</name>
    <name type="synonym">Equus africanus asinus</name>
    <dbReference type="NCBI Taxonomy" id="9793"/>
</organismHost>
<organismHost>
    <name type="scientific">Equus caballus</name>
    <name type="common">Horse</name>
    <dbReference type="NCBI Taxonomy" id="9796"/>
</organismHost>
<organismHost>
    <name type="scientific">Homo sapiens</name>
    <name type="common">Human</name>
    <dbReference type="NCBI Taxonomy" id="9606"/>
</organismHost>
<organismHost>
    <name type="scientific">Lutzomyia</name>
    <dbReference type="NCBI Taxonomy" id="252607"/>
</organismHost>
<organismHost>
    <name type="scientific">Musca domestica</name>
    <name type="common">House fly</name>
    <dbReference type="NCBI Taxonomy" id="7370"/>
</organismHost>
<organismHost>
    <name type="scientific">Simuliidae</name>
    <name type="common">black flies</name>
    <dbReference type="NCBI Taxonomy" id="7190"/>
</organismHost>
<organismHost>
    <name type="scientific">Sus scrofa</name>
    <name type="common">Pig</name>
    <dbReference type="NCBI Taxonomy" id="9823"/>
</organismHost>
<sequence>MRLKHNGRKSPIMNCSKRTDRKSILSPLIFRQQMILIQNLNQKLKTIKACLYQTWKLSRLKALYRSL</sequence>